<keyword id="KW-0010">Activator</keyword>
<keyword id="KW-0238">DNA-binding</keyword>
<keyword id="KW-0678">Repressor</keyword>
<keyword id="KW-0804">Transcription</keyword>
<keyword id="KW-0805">Transcription regulation</keyword>
<protein>
    <recommendedName>
        <fullName evidence="1">Transcriptional regulator SlyA</fullName>
    </recommendedName>
</protein>
<reference key="1">
    <citation type="submission" date="2009-07" db="EMBL/GenBank/DDBJ databases">
        <title>Complete sequence of Pectobacterium carotovorum subsp. carotovorum PC1.</title>
        <authorList>
            <consortium name="US DOE Joint Genome Institute"/>
            <person name="Lucas S."/>
            <person name="Copeland A."/>
            <person name="Lapidus A."/>
            <person name="Glavina del Rio T."/>
            <person name="Tice H."/>
            <person name="Bruce D."/>
            <person name="Goodwin L."/>
            <person name="Pitluck S."/>
            <person name="Munk A.C."/>
            <person name="Brettin T."/>
            <person name="Detter J.C."/>
            <person name="Han C."/>
            <person name="Tapia R."/>
            <person name="Larimer F."/>
            <person name="Land M."/>
            <person name="Hauser L."/>
            <person name="Kyrpides N."/>
            <person name="Mikhailova N."/>
            <person name="Balakrishnan V."/>
            <person name="Glasner J."/>
            <person name="Perna N.T."/>
        </authorList>
    </citation>
    <scope>NUCLEOTIDE SEQUENCE [LARGE SCALE GENOMIC DNA]</scope>
    <source>
        <strain>PC1</strain>
    </source>
</reference>
<dbReference type="EMBL" id="CP001657">
    <property type="protein sequence ID" value="ACT13413.1"/>
    <property type="molecule type" value="Genomic_DNA"/>
</dbReference>
<dbReference type="RefSeq" id="WP_015840595.1">
    <property type="nucleotide sequence ID" value="NC_012917.1"/>
</dbReference>
<dbReference type="SMR" id="C6DK30"/>
<dbReference type="STRING" id="561230.PC1_2382"/>
<dbReference type="GeneID" id="67794380"/>
<dbReference type="KEGG" id="pct:PC1_2382"/>
<dbReference type="eggNOG" id="COG1846">
    <property type="taxonomic scope" value="Bacteria"/>
</dbReference>
<dbReference type="HOGENOM" id="CLU_083287_18_2_6"/>
<dbReference type="OrthoDB" id="5296557at2"/>
<dbReference type="Proteomes" id="UP000002736">
    <property type="component" value="Chromosome"/>
</dbReference>
<dbReference type="GO" id="GO:0003677">
    <property type="term" value="F:DNA binding"/>
    <property type="evidence" value="ECO:0007669"/>
    <property type="project" value="UniProtKB-UniRule"/>
</dbReference>
<dbReference type="GO" id="GO:0003700">
    <property type="term" value="F:DNA-binding transcription factor activity"/>
    <property type="evidence" value="ECO:0007669"/>
    <property type="project" value="UniProtKB-UniRule"/>
</dbReference>
<dbReference type="GO" id="GO:0006950">
    <property type="term" value="P:response to stress"/>
    <property type="evidence" value="ECO:0007669"/>
    <property type="project" value="TreeGrafter"/>
</dbReference>
<dbReference type="Gene3D" id="1.10.10.10">
    <property type="entry name" value="Winged helix-like DNA-binding domain superfamily/Winged helix DNA-binding domain"/>
    <property type="match status" value="1"/>
</dbReference>
<dbReference type="HAMAP" id="MF_01819">
    <property type="entry name" value="HTH_type_SlyA"/>
    <property type="match status" value="1"/>
</dbReference>
<dbReference type="InterPro" id="IPR000835">
    <property type="entry name" value="HTH_MarR-typ"/>
</dbReference>
<dbReference type="InterPro" id="IPR039422">
    <property type="entry name" value="MarR/SlyA-like"/>
</dbReference>
<dbReference type="InterPro" id="IPR023187">
    <property type="entry name" value="Tscrpt_reg_MarR-type_CS"/>
</dbReference>
<dbReference type="InterPro" id="IPR023071">
    <property type="entry name" value="Tscrpt_reg_SlyA"/>
</dbReference>
<dbReference type="InterPro" id="IPR036388">
    <property type="entry name" value="WH-like_DNA-bd_sf"/>
</dbReference>
<dbReference type="InterPro" id="IPR036390">
    <property type="entry name" value="WH_DNA-bd_sf"/>
</dbReference>
<dbReference type="NCBIfam" id="NF002926">
    <property type="entry name" value="PRK03573.1"/>
    <property type="match status" value="1"/>
</dbReference>
<dbReference type="PANTHER" id="PTHR33164:SF64">
    <property type="entry name" value="TRANSCRIPTIONAL REGULATOR SLYA"/>
    <property type="match status" value="1"/>
</dbReference>
<dbReference type="PANTHER" id="PTHR33164">
    <property type="entry name" value="TRANSCRIPTIONAL REGULATOR, MARR FAMILY"/>
    <property type="match status" value="1"/>
</dbReference>
<dbReference type="Pfam" id="PF01047">
    <property type="entry name" value="MarR"/>
    <property type="match status" value="1"/>
</dbReference>
<dbReference type="PRINTS" id="PR00598">
    <property type="entry name" value="HTHMARR"/>
</dbReference>
<dbReference type="SMART" id="SM00347">
    <property type="entry name" value="HTH_MARR"/>
    <property type="match status" value="1"/>
</dbReference>
<dbReference type="SUPFAM" id="SSF46785">
    <property type="entry name" value="Winged helix' DNA-binding domain"/>
    <property type="match status" value="1"/>
</dbReference>
<dbReference type="PROSITE" id="PS01117">
    <property type="entry name" value="HTH_MARR_1"/>
    <property type="match status" value="1"/>
</dbReference>
<dbReference type="PROSITE" id="PS50995">
    <property type="entry name" value="HTH_MARR_2"/>
    <property type="match status" value="1"/>
</dbReference>
<organism>
    <name type="scientific">Pectobacterium carotovorum subsp. carotovorum (strain PC1)</name>
    <dbReference type="NCBI Taxonomy" id="561230"/>
    <lineage>
        <taxon>Bacteria</taxon>
        <taxon>Pseudomonadati</taxon>
        <taxon>Pseudomonadota</taxon>
        <taxon>Gammaproteobacteria</taxon>
        <taxon>Enterobacterales</taxon>
        <taxon>Pectobacteriaceae</taxon>
        <taxon>Pectobacterium</taxon>
    </lineage>
</organism>
<sequence>MELPLGSDLARLVRVWRALVDHRLKPLELTQTHWVTLHNIYHLPPGQSQIQLAKAIGIEQPSLVRTLDQLEEKGLITRHVCAHDRRAKRIMLTESAEPIIQAVNGVISHTRNEVLFGITPEQVDELALLVARLEKNILALHENQA</sequence>
<proteinExistence type="inferred from homology"/>
<comment type="function">
    <text evidence="1">Transcription regulator that can specifically activate or repress expression of target genes.</text>
</comment>
<comment type="subunit">
    <text evidence="1">Homodimer.</text>
</comment>
<comment type="similarity">
    <text evidence="1">Belongs to the SlyA family.</text>
</comment>
<name>SLYA_PECCP</name>
<accession>C6DK30</accession>
<evidence type="ECO:0000255" key="1">
    <source>
        <dbReference type="HAMAP-Rule" id="MF_01819"/>
    </source>
</evidence>
<gene>
    <name evidence="1" type="primary">slyA</name>
    <name type="ordered locus">PC1_2382</name>
</gene>
<feature type="chain" id="PRO_1000216024" description="Transcriptional regulator SlyA">
    <location>
        <begin position="1"/>
        <end position="145"/>
    </location>
</feature>
<feature type="domain" description="HTH marR-type" evidence="1">
    <location>
        <begin position="2"/>
        <end position="135"/>
    </location>
</feature>
<feature type="DNA-binding region" description="H-T-H motif" evidence="1">
    <location>
        <begin position="49"/>
        <end position="72"/>
    </location>
</feature>